<organism>
    <name type="scientific">Arabidopsis thaliana</name>
    <name type="common">Mouse-ear cress</name>
    <dbReference type="NCBI Taxonomy" id="3702"/>
    <lineage>
        <taxon>Eukaryota</taxon>
        <taxon>Viridiplantae</taxon>
        <taxon>Streptophyta</taxon>
        <taxon>Embryophyta</taxon>
        <taxon>Tracheophyta</taxon>
        <taxon>Spermatophyta</taxon>
        <taxon>Magnoliopsida</taxon>
        <taxon>eudicotyledons</taxon>
        <taxon>Gunneridae</taxon>
        <taxon>Pentapetalae</taxon>
        <taxon>rosids</taxon>
        <taxon>malvids</taxon>
        <taxon>Brassicales</taxon>
        <taxon>Brassicaceae</taxon>
        <taxon>Camelineae</taxon>
        <taxon>Arabidopsis</taxon>
    </lineage>
</organism>
<keyword id="KW-0025">Alternative splicing</keyword>
<keyword id="KW-0119">Carbohydrate metabolism</keyword>
<keyword id="KW-0963">Cytoplasm</keyword>
<keyword id="KW-0326">Glycosidase</keyword>
<keyword id="KW-0378">Hydrolase</keyword>
<keyword id="KW-0597">Phosphoprotein</keyword>
<keyword id="KW-1185">Reference proteome</keyword>
<name>CINV2_ARATH</name>
<evidence type="ECO:0000250" key="1">
    <source>
        <dbReference type="UniProtKB" id="Q9LQF2"/>
    </source>
</evidence>
<evidence type="ECO:0000269" key="2">
    <source>
    </source>
</evidence>
<evidence type="ECO:0000303" key="3">
    <source>
    </source>
</evidence>
<evidence type="ECO:0000303" key="4">
    <source>
    </source>
</evidence>
<evidence type="ECO:0000303" key="5">
    <source ref="4"/>
</evidence>
<evidence type="ECO:0000305" key="6"/>
<gene>
    <name evidence="3" type="primary">CINV2</name>
    <name evidence="4" type="synonym">INVI</name>
    <name type="ordered locus">At4g09510</name>
    <name type="ORF">T15G18.70</name>
</gene>
<accession>Q67XD9</accession>
<accession>Q08A96</accession>
<accession>Q9M0P2</accession>
<protein>
    <recommendedName>
        <fullName evidence="6">Alkaline/neutral invertase CINV2</fullName>
        <ecNumber evidence="2">3.2.1.26</ecNumber>
    </recommendedName>
    <alternativeName>
        <fullName evidence="6">Alkaline/neutral invertase I</fullName>
        <shortName evidence="4">A/N-INVI</shortName>
    </alternativeName>
    <alternativeName>
        <fullName evidence="3">Cytosolic invertase 2</fullName>
    </alternativeName>
</protein>
<dbReference type="EC" id="3.2.1.26" evidence="2"/>
<dbReference type="EMBL" id="AL161515">
    <property type="protein sequence ID" value="CAB78074.1"/>
    <property type="status" value="ALT_SEQ"/>
    <property type="molecule type" value="Genomic_DNA"/>
</dbReference>
<dbReference type="EMBL" id="CP002687">
    <property type="protein sequence ID" value="AEE82759.1"/>
    <property type="molecule type" value="Genomic_DNA"/>
</dbReference>
<dbReference type="EMBL" id="CP002687">
    <property type="protein sequence ID" value="AEE82760.1"/>
    <property type="molecule type" value="Genomic_DNA"/>
</dbReference>
<dbReference type="EMBL" id="AK176880">
    <property type="protein sequence ID" value="BAD44643.1"/>
    <property type="molecule type" value="mRNA"/>
</dbReference>
<dbReference type="EMBL" id="BT028983">
    <property type="protein sequence ID" value="ABI93892.1"/>
    <property type="molecule type" value="mRNA"/>
</dbReference>
<dbReference type="PIR" id="A85097">
    <property type="entry name" value="A85097"/>
</dbReference>
<dbReference type="RefSeq" id="NP_567347.1">
    <molecule id="Q67XD9-1"/>
    <property type="nucleotide sequence ID" value="NM_117019.5"/>
</dbReference>
<dbReference type="RefSeq" id="NP_974525.1">
    <molecule id="Q67XD9-2"/>
    <property type="nucleotide sequence ID" value="NM_202796.2"/>
</dbReference>
<dbReference type="SMR" id="Q67XD9"/>
<dbReference type="BioGRID" id="11834">
    <property type="interactions" value="1"/>
</dbReference>
<dbReference type="FunCoup" id="Q67XD9">
    <property type="interactions" value="261"/>
</dbReference>
<dbReference type="STRING" id="3702.Q67XD9"/>
<dbReference type="CAZy" id="GH100">
    <property type="family name" value="Glycoside Hydrolase Family 100"/>
</dbReference>
<dbReference type="iPTMnet" id="Q67XD9"/>
<dbReference type="PaxDb" id="3702-AT4G09510.1"/>
<dbReference type="ProteomicsDB" id="246849">
    <molecule id="Q67XD9-1"/>
</dbReference>
<dbReference type="EnsemblPlants" id="AT4G09510.1">
    <molecule id="Q67XD9-1"/>
    <property type="protein sequence ID" value="AT4G09510.1"/>
    <property type="gene ID" value="AT4G09510"/>
</dbReference>
<dbReference type="EnsemblPlants" id="AT4G09510.2">
    <molecule id="Q67XD9-2"/>
    <property type="protein sequence ID" value="AT4G09510.2"/>
    <property type="gene ID" value="AT4G09510"/>
</dbReference>
<dbReference type="GeneID" id="826535"/>
<dbReference type="Gramene" id="AT4G09510.1">
    <molecule id="Q67XD9-1"/>
    <property type="protein sequence ID" value="AT4G09510.1"/>
    <property type="gene ID" value="AT4G09510"/>
</dbReference>
<dbReference type="Gramene" id="AT4G09510.2">
    <molecule id="Q67XD9-2"/>
    <property type="protein sequence ID" value="AT4G09510.2"/>
    <property type="gene ID" value="AT4G09510"/>
</dbReference>
<dbReference type="KEGG" id="ath:AT4G09510"/>
<dbReference type="Araport" id="AT4G09510"/>
<dbReference type="TAIR" id="AT4G09510">
    <property type="gene designation" value="CINV2"/>
</dbReference>
<dbReference type="eggNOG" id="ENOG502QPS0">
    <property type="taxonomic scope" value="Eukaryota"/>
</dbReference>
<dbReference type="HOGENOM" id="CLU_020846_1_1_1"/>
<dbReference type="InParanoid" id="Q67XD9"/>
<dbReference type="OMA" id="HDLDMAH"/>
<dbReference type="PhylomeDB" id="Q67XD9"/>
<dbReference type="BioCyc" id="MetaCyc:AT4G09510-MONOMER"/>
<dbReference type="PRO" id="PR:Q67XD9"/>
<dbReference type="Proteomes" id="UP000006548">
    <property type="component" value="Chromosome 4"/>
</dbReference>
<dbReference type="ExpressionAtlas" id="Q67XD9">
    <property type="expression patterns" value="baseline and differential"/>
</dbReference>
<dbReference type="GO" id="GO:0005829">
    <property type="term" value="C:cytosol"/>
    <property type="evidence" value="ECO:0000303"/>
    <property type="project" value="TAIR"/>
</dbReference>
<dbReference type="GO" id="GO:0004564">
    <property type="term" value="F:beta-fructofuranosidase activity"/>
    <property type="evidence" value="ECO:0000316"/>
    <property type="project" value="TAIR"/>
</dbReference>
<dbReference type="GO" id="GO:0033926">
    <property type="term" value="F:endo-alpha-N-acetylgalactosaminidase activity"/>
    <property type="evidence" value="ECO:0007669"/>
    <property type="project" value="InterPro"/>
</dbReference>
<dbReference type="GO" id="GO:0048364">
    <property type="term" value="P:root development"/>
    <property type="evidence" value="ECO:0000316"/>
    <property type="project" value="TAIR"/>
</dbReference>
<dbReference type="GO" id="GO:0005987">
    <property type="term" value="P:sucrose catabolic process"/>
    <property type="evidence" value="ECO:0000316"/>
    <property type="project" value="TAIR"/>
</dbReference>
<dbReference type="FunFam" id="1.50.10.10:FF:000001">
    <property type="entry name" value="probable alkaline/neutral invertase B"/>
    <property type="match status" value="1"/>
</dbReference>
<dbReference type="Gene3D" id="1.50.10.10">
    <property type="match status" value="1"/>
</dbReference>
<dbReference type="InterPro" id="IPR008928">
    <property type="entry name" value="6-hairpin_glycosidase_sf"/>
</dbReference>
<dbReference type="InterPro" id="IPR012341">
    <property type="entry name" value="6hp_glycosidase-like_sf"/>
</dbReference>
<dbReference type="InterPro" id="IPR024746">
    <property type="entry name" value="Glyco_hydro_100"/>
</dbReference>
<dbReference type="PANTHER" id="PTHR31916">
    <property type="match status" value="1"/>
</dbReference>
<dbReference type="PANTHER" id="PTHR31916:SF39">
    <property type="entry name" value="ALKALINE_NEUTRAL INVERTASE CINV2"/>
    <property type="match status" value="1"/>
</dbReference>
<dbReference type="Pfam" id="PF12899">
    <property type="entry name" value="Glyco_hydro_100"/>
    <property type="match status" value="1"/>
</dbReference>
<dbReference type="SUPFAM" id="SSF48208">
    <property type="entry name" value="Six-hairpin glycosidases"/>
    <property type="match status" value="1"/>
</dbReference>
<comment type="function">
    <text evidence="2">Cytosolic invertase that may cleave sucrose into glucose and fructose, and that is involved in the regulation of root growth. May regulate sugar-mediated root development by controlling sucrose catabolism in root cells.</text>
</comment>
<comment type="catalytic activity">
    <reaction evidence="2">
        <text>Hydrolysis of terminal non-reducing beta-D-fructofuranoside residues in beta-D-fructofuranosides.</text>
        <dbReference type="EC" id="3.2.1.26"/>
    </reaction>
</comment>
<comment type="subcellular location">
    <subcellularLocation>
        <location evidence="1">Cytoplasm</location>
        <location evidence="1">Cytosol</location>
    </subcellularLocation>
</comment>
<comment type="alternative products">
    <event type="alternative splicing"/>
    <isoform>
        <id>Q67XD9-1</id>
        <name>1</name>
        <sequence type="displayed"/>
    </isoform>
    <isoform>
        <id>Q67XD9-2</id>
        <name>2</name>
        <sequence type="described" ref="VSP_046440 VSP_046441"/>
    </isoform>
</comment>
<comment type="similarity">
    <text evidence="6">Belongs to the glycosyl hydrolase 100 family.</text>
</comment>
<comment type="sequence caution" evidence="6">
    <conflict type="erroneous gene model prediction">
        <sequence resource="EMBL-CDS" id="CAB78074"/>
    </conflict>
</comment>
<sequence length="558" mass="64233">MEEGHKEPLVLRVEGSHCSLSEMDDFDLTRALEKPRQLKIERKRSFDERSMSELSTGYVRQDSILEMAHSPGSRSMVDTPLSVRNSFEPHPMVAEAWEALRRSMVFFRGQPVGTIAAYDHASEEVLNYDQVFVRDFVPSALAFLMNGEPDIVKNFLLKTLQLQGWEKRVDRFKLGEGVMPASFKVLHDPVRKTDTIIADFGESAIGRVAPVDSGFWWIILLRAYTKSTGDLTLSETPECQRGMRLILSLCLSEGFDTFPTLLCADGCSMVDRRMGVYGYPIEIQALFFMALRCALSMLKPDEEGRDFIERIVKRLHALSFHMRSYFWLDFQQLNDIYRYKTEEYSHTAVNKFNVMPDSIPDWVFDFMPLRGGYFVGNVSPARMDFRWFSLGNCVSILSSLATPDQSMAIMDLLEHRWEELVGEMPLKICYPCIESHEWRIVTGCDPKNTRWSYHNGGSWPVLLWTLTAACIKTGRPQIARRAIDLIESRLHRDCWPEYYDGKQGRYVGKQARKYQTWSIAGYLVAKMMLEDPSHIGMISLEEDKQMKPVIKRSASWTC</sequence>
<feature type="chain" id="PRO_0000422135" description="Alkaline/neutral invertase CINV2">
    <location>
        <begin position="1"/>
        <end position="558"/>
    </location>
</feature>
<feature type="modified residue" description="Phosphoserine" evidence="1">
    <location>
        <position position="16"/>
    </location>
</feature>
<feature type="modified residue" description="Phosphoserine" evidence="1">
    <location>
        <position position="19"/>
    </location>
</feature>
<feature type="modified residue" description="Phosphoserine" evidence="1">
    <location>
        <position position="50"/>
    </location>
</feature>
<feature type="modified residue" description="Phosphothreonine" evidence="1">
    <location>
        <position position="79"/>
    </location>
</feature>
<feature type="modified residue" description="Phosphoserine" evidence="1">
    <location>
        <position position="555"/>
    </location>
</feature>
<feature type="splice variant" id="VSP_046440" description="In isoform 2." evidence="5">
    <original>V</original>
    <variation>G</variation>
    <location>
        <position position="461"/>
    </location>
</feature>
<feature type="splice variant" id="VSP_046441" description="In isoform 2." evidence="5">
    <location>
        <begin position="462"/>
        <end position="558"/>
    </location>
</feature>
<proteinExistence type="evidence at protein level"/>
<reference key="1">
    <citation type="journal article" date="1999" name="Nature">
        <title>Sequence and analysis of chromosome 4 of the plant Arabidopsis thaliana.</title>
        <authorList>
            <person name="Mayer K.F.X."/>
            <person name="Schueller C."/>
            <person name="Wambutt R."/>
            <person name="Murphy G."/>
            <person name="Volckaert G."/>
            <person name="Pohl T."/>
            <person name="Duesterhoeft A."/>
            <person name="Stiekema W."/>
            <person name="Entian K.-D."/>
            <person name="Terryn N."/>
            <person name="Harris B."/>
            <person name="Ansorge W."/>
            <person name="Brandt P."/>
            <person name="Grivell L.A."/>
            <person name="Rieger M."/>
            <person name="Weichselgartner M."/>
            <person name="de Simone V."/>
            <person name="Obermaier B."/>
            <person name="Mache R."/>
            <person name="Mueller M."/>
            <person name="Kreis M."/>
            <person name="Delseny M."/>
            <person name="Puigdomenech P."/>
            <person name="Watson M."/>
            <person name="Schmidtheini T."/>
            <person name="Reichert B."/>
            <person name="Portetelle D."/>
            <person name="Perez-Alonso M."/>
            <person name="Boutry M."/>
            <person name="Bancroft I."/>
            <person name="Vos P."/>
            <person name="Hoheisel J."/>
            <person name="Zimmermann W."/>
            <person name="Wedler H."/>
            <person name="Ridley P."/>
            <person name="Langham S.-A."/>
            <person name="McCullagh B."/>
            <person name="Bilham L."/>
            <person name="Robben J."/>
            <person name="van der Schueren J."/>
            <person name="Grymonprez B."/>
            <person name="Chuang Y.-J."/>
            <person name="Vandenbussche F."/>
            <person name="Braeken M."/>
            <person name="Weltjens I."/>
            <person name="Voet M."/>
            <person name="Bastiaens I."/>
            <person name="Aert R."/>
            <person name="Defoor E."/>
            <person name="Weitzenegger T."/>
            <person name="Bothe G."/>
            <person name="Ramsperger U."/>
            <person name="Hilbert H."/>
            <person name="Braun M."/>
            <person name="Holzer E."/>
            <person name="Brandt A."/>
            <person name="Peters S."/>
            <person name="van Staveren M."/>
            <person name="Dirkse W."/>
            <person name="Mooijman P."/>
            <person name="Klein Lankhorst R."/>
            <person name="Rose M."/>
            <person name="Hauf J."/>
            <person name="Koetter P."/>
            <person name="Berneiser S."/>
            <person name="Hempel S."/>
            <person name="Feldpausch M."/>
            <person name="Lamberth S."/>
            <person name="Van den Daele H."/>
            <person name="De Keyser A."/>
            <person name="Buysshaert C."/>
            <person name="Gielen J."/>
            <person name="Villarroel R."/>
            <person name="De Clercq R."/>
            <person name="van Montagu M."/>
            <person name="Rogers J."/>
            <person name="Cronin A."/>
            <person name="Quail M.A."/>
            <person name="Bray-Allen S."/>
            <person name="Clark L."/>
            <person name="Doggett J."/>
            <person name="Hall S."/>
            <person name="Kay M."/>
            <person name="Lennard N."/>
            <person name="McLay K."/>
            <person name="Mayes R."/>
            <person name="Pettett A."/>
            <person name="Rajandream M.A."/>
            <person name="Lyne M."/>
            <person name="Benes V."/>
            <person name="Rechmann S."/>
            <person name="Borkova D."/>
            <person name="Bloecker H."/>
            <person name="Scharfe M."/>
            <person name="Grimm M."/>
            <person name="Loehnert T.-H."/>
            <person name="Dose S."/>
            <person name="de Haan M."/>
            <person name="Maarse A.C."/>
            <person name="Schaefer M."/>
            <person name="Mueller-Auer S."/>
            <person name="Gabel C."/>
            <person name="Fuchs M."/>
            <person name="Fartmann B."/>
            <person name="Granderath K."/>
            <person name="Dauner D."/>
            <person name="Herzl A."/>
            <person name="Neumann S."/>
            <person name="Argiriou A."/>
            <person name="Vitale D."/>
            <person name="Liguori R."/>
            <person name="Piravandi E."/>
            <person name="Massenet O."/>
            <person name="Quigley F."/>
            <person name="Clabauld G."/>
            <person name="Muendlein A."/>
            <person name="Felber R."/>
            <person name="Schnabl S."/>
            <person name="Hiller R."/>
            <person name="Schmidt W."/>
            <person name="Lecharny A."/>
            <person name="Aubourg S."/>
            <person name="Chefdor F."/>
            <person name="Cooke R."/>
            <person name="Berger C."/>
            <person name="Monfort A."/>
            <person name="Casacuberta E."/>
            <person name="Gibbons T."/>
            <person name="Weber N."/>
            <person name="Vandenbol M."/>
            <person name="Bargues M."/>
            <person name="Terol J."/>
            <person name="Torres A."/>
            <person name="Perez-Perez A."/>
            <person name="Purnelle B."/>
            <person name="Bent E."/>
            <person name="Johnson S."/>
            <person name="Tacon D."/>
            <person name="Jesse T."/>
            <person name="Heijnen L."/>
            <person name="Schwarz S."/>
            <person name="Scholler P."/>
            <person name="Heber S."/>
            <person name="Francs P."/>
            <person name="Bielke C."/>
            <person name="Frishman D."/>
            <person name="Haase D."/>
            <person name="Lemcke K."/>
            <person name="Mewes H.-W."/>
            <person name="Stocker S."/>
            <person name="Zaccaria P."/>
            <person name="Bevan M."/>
            <person name="Wilson R.K."/>
            <person name="de la Bastide M."/>
            <person name="Habermann K."/>
            <person name="Parnell L."/>
            <person name="Dedhia N."/>
            <person name="Gnoj L."/>
            <person name="Schutz K."/>
            <person name="Huang E."/>
            <person name="Spiegel L."/>
            <person name="Sekhon M."/>
            <person name="Murray J."/>
            <person name="Sheet P."/>
            <person name="Cordes M."/>
            <person name="Abu-Threideh J."/>
            <person name="Stoneking T."/>
            <person name="Kalicki J."/>
            <person name="Graves T."/>
            <person name="Harmon G."/>
            <person name="Edwards J."/>
            <person name="Latreille P."/>
            <person name="Courtney L."/>
            <person name="Cloud J."/>
            <person name="Abbott A."/>
            <person name="Scott K."/>
            <person name="Johnson D."/>
            <person name="Minx P."/>
            <person name="Bentley D."/>
            <person name="Fulton B."/>
            <person name="Miller N."/>
            <person name="Greco T."/>
            <person name="Kemp K."/>
            <person name="Kramer J."/>
            <person name="Fulton L."/>
            <person name="Mardis E."/>
            <person name="Dante M."/>
            <person name="Pepin K."/>
            <person name="Hillier L.W."/>
            <person name="Nelson J."/>
            <person name="Spieth J."/>
            <person name="Ryan E."/>
            <person name="Andrews S."/>
            <person name="Geisel C."/>
            <person name="Layman D."/>
            <person name="Du H."/>
            <person name="Ali J."/>
            <person name="Berghoff A."/>
            <person name="Jones K."/>
            <person name="Drone K."/>
            <person name="Cotton M."/>
            <person name="Joshu C."/>
            <person name="Antonoiu B."/>
            <person name="Zidanic M."/>
            <person name="Strong C."/>
            <person name="Sun H."/>
            <person name="Lamar B."/>
            <person name="Yordan C."/>
            <person name="Ma P."/>
            <person name="Zhong J."/>
            <person name="Preston R."/>
            <person name="Vil D."/>
            <person name="Shekher M."/>
            <person name="Matero A."/>
            <person name="Shah R."/>
            <person name="Swaby I.K."/>
            <person name="O'Shaughnessy A."/>
            <person name="Rodriguez M."/>
            <person name="Hoffman J."/>
            <person name="Till S."/>
            <person name="Granat S."/>
            <person name="Shohdy N."/>
            <person name="Hasegawa A."/>
            <person name="Hameed A."/>
            <person name="Lodhi M."/>
            <person name="Johnson A."/>
            <person name="Chen E."/>
            <person name="Marra M.A."/>
            <person name="Martienssen R."/>
            <person name="McCombie W.R."/>
        </authorList>
    </citation>
    <scope>NUCLEOTIDE SEQUENCE [LARGE SCALE GENOMIC DNA]</scope>
    <source>
        <strain>cv. Columbia</strain>
    </source>
</reference>
<reference key="2">
    <citation type="journal article" date="2017" name="Plant J.">
        <title>Araport11: a complete reannotation of the Arabidopsis thaliana reference genome.</title>
        <authorList>
            <person name="Cheng C.Y."/>
            <person name="Krishnakumar V."/>
            <person name="Chan A.P."/>
            <person name="Thibaud-Nissen F."/>
            <person name="Schobel S."/>
            <person name="Town C.D."/>
        </authorList>
    </citation>
    <scope>GENOME REANNOTATION</scope>
    <source>
        <strain>cv. Columbia</strain>
    </source>
</reference>
<reference key="3">
    <citation type="submission" date="2004-09" db="EMBL/GenBank/DDBJ databases">
        <title>Large-scale analysis of RIKEN Arabidopsis full-length (RAFL) cDNAs.</title>
        <authorList>
            <person name="Totoki Y."/>
            <person name="Seki M."/>
            <person name="Ishida J."/>
            <person name="Nakajima M."/>
            <person name="Enju A."/>
            <person name="Kamiya A."/>
            <person name="Narusaka M."/>
            <person name="Shin-i T."/>
            <person name="Nakagawa M."/>
            <person name="Sakamoto N."/>
            <person name="Oishi K."/>
            <person name="Kohara Y."/>
            <person name="Kobayashi M."/>
            <person name="Toyoda A."/>
            <person name="Sakaki Y."/>
            <person name="Sakurai T."/>
            <person name="Iida K."/>
            <person name="Akiyama K."/>
            <person name="Satou M."/>
            <person name="Toyoda T."/>
            <person name="Konagaya A."/>
            <person name="Carninci P."/>
            <person name="Kawai J."/>
            <person name="Hayashizaki Y."/>
            <person name="Shinozaki K."/>
        </authorList>
    </citation>
    <scope>NUCLEOTIDE SEQUENCE [LARGE SCALE MRNA] (ISOFORM 1)</scope>
    <source>
        <strain>cv. Columbia</strain>
    </source>
</reference>
<reference key="4">
    <citation type="submission" date="2006-09" db="EMBL/GenBank/DDBJ databases">
        <title>Arabidopsis ORF clones.</title>
        <authorList>
            <person name="Kim C.J."/>
            <person name="Chen H."/>
            <person name="Quinitio C."/>
            <person name="Shinn P."/>
            <person name="Ecker J.R."/>
        </authorList>
    </citation>
    <scope>NUCLEOTIDE SEQUENCE [MRNA] (ISOFORM 2)</scope>
    <source>
        <strain>cv. Columbia</strain>
    </source>
</reference>
<reference key="5">
    <citation type="journal article" date="2009" name="Proc. Natl. Acad. Sci. U.S.A.">
        <title>Normal growth of Arabidopsis requires cytosolic invertase but not sucrose synthase.</title>
        <authorList>
            <person name="Barratt D.H."/>
            <person name="Derbyshire P."/>
            <person name="Findlay K."/>
            <person name="Pike M."/>
            <person name="Wellner N."/>
            <person name="Lunn J."/>
            <person name="Feil R."/>
            <person name="Simpson C."/>
            <person name="Maule A.J."/>
            <person name="Smith A.M."/>
        </authorList>
    </citation>
    <scope>FUNCTION</scope>
    <scope>CATALYTIC ACTIVITY</scope>
</reference>
<reference key="6">
    <citation type="journal article" date="2011" name="J. Exp. Bot.">
        <title>Exploring the neutral invertase-oxidative stress defence connection in Arabidopsis thaliana.</title>
        <authorList>
            <person name="Xiang L."/>
            <person name="Le Roy K."/>
            <person name="Bolouri-Moghaddam M.R."/>
            <person name="Vanhaecke M."/>
            <person name="Lammens W."/>
            <person name="Rolland F."/>
            <person name="Van den Ende W."/>
        </authorList>
    </citation>
    <scope>GENE FAMILY</scope>
</reference>